<comment type="function">
    <text evidence="1">Catalyzes the trimethylation of 'Lys-116' in calmodulin.</text>
</comment>
<comment type="catalytic activity">
    <reaction evidence="3">
        <text>[calmodulin]-L-lysine + S-adenosyl-L-methionine = [calmodulin]-N(6)-methyl-L-lysine + S-adenosyl-L-homocysteine + H(+)</text>
        <dbReference type="Rhea" id="RHEA:21556"/>
        <dbReference type="Rhea" id="RHEA-COMP:11360"/>
        <dbReference type="Rhea" id="RHEA-COMP:11361"/>
        <dbReference type="ChEBI" id="CHEBI:15378"/>
        <dbReference type="ChEBI" id="CHEBI:29969"/>
        <dbReference type="ChEBI" id="CHEBI:57856"/>
        <dbReference type="ChEBI" id="CHEBI:59789"/>
        <dbReference type="ChEBI" id="CHEBI:61929"/>
        <dbReference type="EC" id="2.1.1.60"/>
    </reaction>
</comment>
<comment type="subunit">
    <text evidence="1">Monomer. Interacts with HSP90, probably as a client (By similarity).</text>
</comment>
<comment type="subcellular location">
    <molecule>Isoform 1</molecule>
    <subcellularLocation>
        <location evidence="2">Cytoplasm</location>
    </subcellularLocation>
    <subcellularLocation>
        <location evidence="2">Nucleus</location>
    </subcellularLocation>
</comment>
<comment type="subcellular location">
    <molecule>Isoform 2</molecule>
    <subcellularLocation>
        <location evidence="2">Golgi apparatus</location>
    </subcellularLocation>
</comment>
<comment type="alternative products">
    <event type="alternative splicing"/>
    <isoform>
        <id>Q3U2J5-1</id>
        <name>1</name>
        <sequence type="displayed"/>
    </isoform>
    <isoform>
        <id>Q3U2J5-2</id>
        <name>2</name>
        <sequence type="described" ref="VSP_027786 VSP_027787"/>
    </isoform>
</comment>
<comment type="tissue specificity">
    <text evidence="5">Detected in most of the tissues examined, with the highest expression in the brain and muscle (at protein level).</text>
</comment>
<comment type="similarity">
    <text evidence="3">Belongs to the class I-like SAM-binding methyltransferase superfamily. CLNMT methyltransferase family.</text>
</comment>
<accession>Q3U2J5</accession>
<accession>Q9D9C5</accession>
<protein>
    <recommendedName>
        <fullName>Calmodulin-lysine N-methyltransferase</fullName>
        <shortName>CLNMT</shortName>
        <shortName>CaM KMT</shortName>
        <ecNumber>2.1.1.60</ecNumber>
    </recommendedName>
</protein>
<keyword id="KW-0025">Alternative splicing</keyword>
<keyword id="KW-0963">Cytoplasm</keyword>
<keyword id="KW-0333">Golgi apparatus</keyword>
<keyword id="KW-0489">Methyltransferase</keyword>
<keyword id="KW-0539">Nucleus</keyword>
<keyword id="KW-1185">Reference proteome</keyword>
<keyword id="KW-0949">S-adenosyl-L-methionine</keyword>
<keyword id="KW-0808">Transferase</keyword>
<name>CMKMT_MOUSE</name>
<dbReference type="EC" id="2.1.1.60"/>
<dbReference type="EMBL" id="AK007130">
    <property type="protein sequence ID" value="BAB24867.1"/>
    <property type="molecule type" value="mRNA"/>
</dbReference>
<dbReference type="EMBL" id="AK155246">
    <property type="protein sequence ID" value="BAE33145.1"/>
    <property type="molecule type" value="mRNA"/>
</dbReference>
<dbReference type="CCDS" id="CCDS37712.1">
    <molecule id="Q3U2J5-1"/>
</dbReference>
<dbReference type="RefSeq" id="NP_082852.1">
    <molecule id="Q3U2J5-1"/>
    <property type="nucleotide sequence ID" value="NM_028576.3"/>
</dbReference>
<dbReference type="SMR" id="Q3U2J5"/>
<dbReference type="BioGRID" id="216118">
    <property type="interactions" value="1"/>
</dbReference>
<dbReference type="FunCoup" id="Q3U2J5">
    <property type="interactions" value="1909"/>
</dbReference>
<dbReference type="STRING" id="10090.ENSMUSP00000092811"/>
<dbReference type="iPTMnet" id="Q3U2J5"/>
<dbReference type="PhosphoSitePlus" id="Q3U2J5"/>
<dbReference type="PaxDb" id="10090-ENSMUSP00000092811"/>
<dbReference type="ProteomicsDB" id="285500">
    <molecule id="Q3U2J5-1"/>
</dbReference>
<dbReference type="ProteomicsDB" id="285501">
    <molecule id="Q3U2J5-2"/>
</dbReference>
<dbReference type="Pumba" id="Q3U2J5"/>
<dbReference type="Antibodypedia" id="53862">
    <property type="antibodies" value="20 antibodies from 12 providers"/>
</dbReference>
<dbReference type="Ensembl" id="ENSMUST00000095188.7">
    <molecule id="Q3U2J5-1"/>
    <property type="protein sequence ID" value="ENSMUSP00000092811.6"/>
    <property type="gene ID" value="ENSMUSG00000071037.7"/>
</dbReference>
<dbReference type="GeneID" id="73582"/>
<dbReference type="KEGG" id="mmu:73582"/>
<dbReference type="UCSC" id="uc008dtt.1">
    <molecule id="Q3U2J5-1"/>
    <property type="organism name" value="mouse"/>
</dbReference>
<dbReference type="AGR" id="MGI:1920832"/>
<dbReference type="CTD" id="79823"/>
<dbReference type="MGI" id="MGI:1920832">
    <property type="gene designation" value="Camkmt"/>
</dbReference>
<dbReference type="VEuPathDB" id="HostDB:ENSMUSG00000071037"/>
<dbReference type="eggNOG" id="KOG3201">
    <property type="taxonomic scope" value="Eukaryota"/>
</dbReference>
<dbReference type="GeneTree" id="ENSGT00390000002168"/>
<dbReference type="HOGENOM" id="CLU_057006_0_0_1"/>
<dbReference type="InParanoid" id="Q3U2J5"/>
<dbReference type="OMA" id="WYYLAPQ"/>
<dbReference type="OrthoDB" id="413520at2759"/>
<dbReference type="PhylomeDB" id="Q3U2J5"/>
<dbReference type="TreeFam" id="TF316589"/>
<dbReference type="BRENDA" id="2.1.1.60">
    <property type="organism ID" value="3474"/>
</dbReference>
<dbReference type="Reactome" id="R-MMU-2514859">
    <property type="pathway name" value="Inactivation, recovery and regulation of the phototransduction cascade"/>
</dbReference>
<dbReference type="Reactome" id="R-MMU-8876725">
    <property type="pathway name" value="Protein methylation"/>
</dbReference>
<dbReference type="BioGRID-ORCS" id="73582">
    <property type="hits" value="1 hit in 76 CRISPR screens"/>
</dbReference>
<dbReference type="ChiTaRS" id="Camkmt">
    <property type="organism name" value="mouse"/>
</dbReference>
<dbReference type="PRO" id="PR:Q3U2J5"/>
<dbReference type="Proteomes" id="UP000000589">
    <property type="component" value="Chromosome 17"/>
</dbReference>
<dbReference type="RNAct" id="Q3U2J5">
    <property type="molecule type" value="protein"/>
</dbReference>
<dbReference type="Bgee" id="ENSMUSG00000071037">
    <property type="expression patterns" value="Expressed in animal zygote and 172 other cell types or tissues"/>
</dbReference>
<dbReference type="ExpressionAtlas" id="Q3U2J5">
    <property type="expression patterns" value="baseline and differential"/>
</dbReference>
<dbReference type="GO" id="GO:0005794">
    <property type="term" value="C:Golgi apparatus"/>
    <property type="evidence" value="ECO:0007669"/>
    <property type="project" value="UniProtKB-SubCell"/>
</dbReference>
<dbReference type="GO" id="GO:0005730">
    <property type="term" value="C:nucleolus"/>
    <property type="evidence" value="ECO:0007669"/>
    <property type="project" value="Ensembl"/>
</dbReference>
<dbReference type="GO" id="GO:0005654">
    <property type="term" value="C:nucleoplasm"/>
    <property type="evidence" value="ECO:0007669"/>
    <property type="project" value="Ensembl"/>
</dbReference>
<dbReference type="GO" id="GO:0032991">
    <property type="term" value="C:protein-containing complex"/>
    <property type="evidence" value="ECO:0007669"/>
    <property type="project" value="Ensembl"/>
</dbReference>
<dbReference type="GO" id="GO:0018025">
    <property type="term" value="F:calmodulin-lysine N-methyltransferase activity"/>
    <property type="evidence" value="ECO:0000315"/>
    <property type="project" value="MGI"/>
</dbReference>
<dbReference type="GO" id="GO:0031072">
    <property type="term" value="F:heat shock protein binding"/>
    <property type="evidence" value="ECO:0007669"/>
    <property type="project" value="Ensembl"/>
</dbReference>
<dbReference type="GO" id="GO:0032259">
    <property type="term" value="P:methylation"/>
    <property type="evidence" value="ECO:0007669"/>
    <property type="project" value="UniProtKB-KW"/>
</dbReference>
<dbReference type="GO" id="GO:0007005">
    <property type="term" value="P:mitochondrion organization"/>
    <property type="evidence" value="ECO:0000315"/>
    <property type="project" value="MGI"/>
</dbReference>
<dbReference type="CDD" id="cd02440">
    <property type="entry name" value="AdoMet_MTases"/>
    <property type="match status" value="1"/>
</dbReference>
<dbReference type="FunFam" id="3.40.50.150:FF:000140">
    <property type="entry name" value="Calmodulin-lysine N-methyltransferase"/>
    <property type="match status" value="1"/>
</dbReference>
<dbReference type="Gene3D" id="3.40.50.150">
    <property type="entry name" value="Vaccinia Virus protein VP39"/>
    <property type="match status" value="1"/>
</dbReference>
<dbReference type="InterPro" id="IPR025800">
    <property type="entry name" value="CaM-Lys-N-MeTrfase"/>
</dbReference>
<dbReference type="InterPro" id="IPR019410">
    <property type="entry name" value="Methyltransf_16"/>
</dbReference>
<dbReference type="InterPro" id="IPR029063">
    <property type="entry name" value="SAM-dependent_MTases_sf"/>
</dbReference>
<dbReference type="PANTHER" id="PTHR13539">
    <property type="entry name" value="CALMODULIN-LYSINE N-METHYLTRANSFERASE"/>
    <property type="match status" value="1"/>
</dbReference>
<dbReference type="PANTHER" id="PTHR13539:SF3">
    <property type="entry name" value="CALMODULIN-LYSINE N-METHYLTRANSFERASE"/>
    <property type="match status" value="1"/>
</dbReference>
<dbReference type="Pfam" id="PF10294">
    <property type="entry name" value="Methyltransf_16"/>
    <property type="match status" value="1"/>
</dbReference>
<dbReference type="SUPFAM" id="SSF53335">
    <property type="entry name" value="S-adenosyl-L-methionine-dependent methyltransferases"/>
    <property type="match status" value="1"/>
</dbReference>
<dbReference type="PROSITE" id="PS51610">
    <property type="entry name" value="SAM_CLNMT"/>
    <property type="match status" value="1"/>
</dbReference>
<feature type="chain" id="PRO_0000300116" description="Calmodulin-lysine N-methyltransferase">
    <location>
        <begin position="1"/>
        <end position="323"/>
    </location>
</feature>
<feature type="region of interest" description="Disordered" evidence="4">
    <location>
        <begin position="1"/>
        <end position="31"/>
    </location>
</feature>
<feature type="compositionally biased region" description="Low complexity" evidence="4">
    <location>
        <begin position="1"/>
        <end position="12"/>
    </location>
</feature>
<feature type="splice variant" id="VSP_027786" description="In isoform 2." evidence="6">
    <original>IWPSEEVLAHYCLKHSHIF</original>
    <variation>DPPPAPHTGGVDGDVFLTT</variation>
    <location>
        <begin position="127"/>
        <end position="145"/>
    </location>
</feature>
<feature type="splice variant" id="VSP_027787" description="In isoform 2." evidence="6">
    <location>
        <begin position="146"/>
        <end position="323"/>
    </location>
</feature>
<sequence>MESQVAAAGAAETEAEAGKRPAMGSASQGSLVSAPKGAVRWQLLRQVLKQKQLDDHLRHVSVRRFESFNLFSVTEATKKGTEKEAGVWVQYTSIFYPKYSISVRHNSGSLNVEDVLTSFDNTGNVCIWPSEEVLAHYCLKHSHIFRDLAVCELGGGMTCLAGLMVAISADVKEVLLTDGNEKAIRNVDSIIACNKKTGVFKTPKISSRVLRWDNETDVSQLEGHFDIVMCADCLFLDQYRASLVDAIKRLLQPTGKAVVFAPRRGNTFNQFCNLAEKAGFSLQRHENYDEPISNFHSKLKKEGSDIYEENLHYPLLLILTKTG</sequence>
<reference key="1">
    <citation type="journal article" date="2005" name="Science">
        <title>The transcriptional landscape of the mammalian genome.</title>
        <authorList>
            <person name="Carninci P."/>
            <person name="Kasukawa T."/>
            <person name="Katayama S."/>
            <person name="Gough J."/>
            <person name="Frith M.C."/>
            <person name="Maeda N."/>
            <person name="Oyama R."/>
            <person name="Ravasi T."/>
            <person name="Lenhard B."/>
            <person name="Wells C."/>
            <person name="Kodzius R."/>
            <person name="Shimokawa K."/>
            <person name="Bajic V.B."/>
            <person name="Brenner S.E."/>
            <person name="Batalov S."/>
            <person name="Forrest A.R."/>
            <person name="Zavolan M."/>
            <person name="Davis M.J."/>
            <person name="Wilming L.G."/>
            <person name="Aidinis V."/>
            <person name="Allen J.E."/>
            <person name="Ambesi-Impiombato A."/>
            <person name="Apweiler R."/>
            <person name="Aturaliya R.N."/>
            <person name="Bailey T.L."/>
            <person name="Bansal M."/>
            <person name="Baxter L."/>
            <person name="Beisel K.W."/>
            <person name="Bersano T."/>
            <person name="Bono H."/>
            <person name="Chalk A.M."/>
            <person name="Chiu K.P."/>
            <person name="Choudhary V."/>
            <person name="Christoffels A."/>
            <person name="Clutterbuck D.R."/>
            <person name="Crowe M.L."/>
            <person name="Dalla E."/>
            <person name="Dalrymple B.P."/>
            <person name="de Bono B."/>
            <person name="Della Gatta G."/>
            <person name="di Bernardo D."/>
            <person name="Down T."/>
            <person name="Engstrom P."/>
            <person name="Fagiolini M."/>
            <person name="Faulkner G."/>
            <person name="Fletcher C.F."/>
            <person name="Fukushima T."/>
            <person name="Furuno M."/>
            <person name="Futaki S."/>
            <person name="Gariboldi M."/>
            <person name="Georgii-Hemming P."/>
            <person name="Gingeras T.R."/>
            <person name="Gojobori T."/>
            <person name="Green R.E."/>
            <person name="Gustincich S."/>
            <person name="Harbers M."/>
            <person name="Hayashi Y."/>
            <person name="Hensch T.K."/>
            <person name="Hirokawa N."/>
            <person name="Hill D."/>
            <person name="Huminiecki L."/>
            <person name="Iacono M."/>
            <person name="Ikeo K."/>
            <person name="Iwama A."/>
            <person name="Ishikawa T."/>
            <person name="Jakt M."/>
            <person name="Kanapin A."/>
            <person name="Katoh M."/>
            <person name="Kawasawa Y."/>
            <person name="Kelso J."/>
            <person name="Kitamura H."/>
            <person name="Kitano H."/>
            <person name="Kollias G."/>
            <person name="Krishnan S.P."/>
            <person name="Kruger A."/>
            <person name="Kummerfeld S.K."/>
            <person name="Kurochkin I.V."/>
            <person name="Lareau L.F."/>
            <person name="Lazarevic D."/>
            <person name="Lipovich L."/>
            <person name="Liu J."/>
            <person name="Liuni S."/>
            <person name="McWilliam S."/>
            <person name="Madan Babu M."/>
            <person name="Madera M."/>
            <person name="Marchionni L."/>
            <person name="Matsuda H."/>
            <person name="Matsuzawa S."/>
            <person name="Miki H."/>
            <person name="Mignone F."/>
            <person name="Miyake S."/>
            <person name="Morris K."/>
            <person name="Mottagui-Tabar S."/>
            <person name="Mulder N."/>
            <person name="Nakano N."/>
            <person name="Nakauchi H."/>
            <person name="Ng P."/>
            <person name="Nilsson R."/>
            <person name="Nishiguchi S."/>
            <person name="Nishikawa S."/>
            <person name="Nori F."/>
            <person name="Ohara O."/>
            <person name="Okazaki Y."/>
            <person name="Orlando V."/>
            <person name="Pang K.C."/>
            <person name="Pavan W.J."/>
            <person name="Pavesi G."/>
            <person name="Pesole G."/>
            <person name="Petrovsky N."/>
            <person name="Piazza S."/>
            <person name="Reed J."/>
            <person name="Reid J.F."/>
            <person name="Ring B.Z."/>
            <person name="Ringwald M."/>
            <person name="Rost B."/>
            <person name="Ruan Y."/>
            <person name="Salzberg S.L."/>
            <person name="Sandelin A."/>
            <person name="Schneider C."/>
            <person name="Schoenbach C."/>
            <person name="Sekiguchi K."/>
            <person name="Semple C.A."/>
            <person name="Seno S."/>
            <person name="Sessa L."/>
            <person name="Sheng Y."/>
            <person name="Shibata Y."/>
            <person name="Shimada H."/>
            <person name="Shimada K."/>
            <person name="Silva D."/>
            <person name="Sinclair B."/>
            <person name="Sperling S."/>
            <person name="Stupka E."/>
            <person name="Sugiura K."/>
            <person name="Sultana R."/>
            <person name="Takenaka Y."/>
            <person name="Taki K."/>
            <person name="Tammoja K."/>
            <person name="Tan S.L."/>
            <person name="Tang S."/>
            <person name="Taylor M.S."/>
            <person name="Tegner J."/>
            <person name="Teichmann S.A."/>
            <person name="Ueda H.R."/>
            <person name="van Nimwegen E."/>
            <person name="Verardo R."/>
            <person name="Wei C.L."/>
            <person name="Yagi K."/>
            <person name="Yamanishi H."/>
            <person name="Zabarovsky E."/>
            <person name="Zhu S."/>
            <person name="Zimmer A."/>
            <person name="Hide W."/>
            <person name="Bult C."/>
            <person name="Grimmond S.M."/>
            <person name="Teasdale R.D."/>
            <person name="Liu E.T."/>
            <person name="Brusic V."/>
            <person name="Quackenbush J."/>
            <person name="Wahlestedt C."/>
            <person name="Mattick J.S."/>
            <person name="Hume D.A."/>
            <person name="Kai C."/>
            <person name="Sasaki D."/>
            <person name="Tomaru Y."/>
            <person name="Fukuda S."/>
            <person name="Kanamori-Katayama M."/>
            <person name="Suzuki M."/>
            <person name="Aoki J."/>
            <person name="Arakawa T."/>
            <person name="Iida J."/>
            <person name="Imamura K."/>
            <person name="Itoh M."/>
            <person name="Kato T."/>
            <person name="Kawaji H."/>
            <person name="Kawagashira N."/>
            <person name="Kawashima T."/>
            <person name="Kojima M."/>
            <person name="Kondo S."/>
            <person name="Konno H."/>
            <person name="Nakano K."/>
            <person name="Ninomiya N."/>
            <person name="Nishio T."/>
            <person name="Okada M."/>
            <person name="Plessy C."/>
            <person name="Shibata K."/>
            <person name="Shiraki T."/>
            <person name="Suzuki S."/>
            <person name="Tagami M."/>
            <person name="Waki K."/>
            <person name="Watahiki A."/>
            <person name="Okamura-Oho Y."/>
            <person name="Suzuki H."/>
            <person name="Kawai J."/>
            <person name="Hayashizaki Y."/>
        </authorList>
    </citation>
    <scope>NUCLEOTIDE SEQUENCE [LARGE SCALE MRNA] (ISOFORMS 1 AND 2)</scope>
    <source>
        <strain>C57BL/6J</strain>
        <strain>NOD</strain>
        <tissue>Testis</tissue>
    </source>
</reference>
<reference key="2">
    <citation type="journal article" date="2012" name="PLoS ONE">
        <title>Human calmodulin methyltransferase: expression, activity on calmodulin, and Hsp90 dependence.</title>
        <authorList>
            <person name="Magen S."/>
            <person name="Magnani R."/>
            <person name="Haziza S."/>
            <person name="Hershkovitz E."/>
            <person name="Houtz R."/>
            <person name="Cambi F."/>
            <person name="Parvari R."/>
        </authorList>
    </citation>
    <scope>TISSUE SPECIFICITY</scope>
</reference>
<organism>
    <name type="scientific">Mus musculus</name>
    <name type="common">Mouse</name>
    <dbReference type="NCBI Taxonomy" id="10090"/>
    <lineage>
        <taxon>Eukaryota</taxon>
        <taxon>Metazoa</taxon>
        <taxon>Chordata</taxon>
        <taxon>Craniata</taxon>
        <taxon>Vertebrata</taxon>
        <taxon>Euteleostomi</taxon>
        <taxon>Mammalia</taxon>
        <taxon>Eutheria</taxon>
        <taxon>Euarchontoglires</taxon>
        <taxon>Glires</taxon>
        <taxon>Rodentia</taxon>
        <taxon>Myomorpha</taxon>
        <taxon>Muroidea</taxon>
        <taxon>Muridae</taxon>
        <taxon>Murinae</taxon>
        <taxon>Mus</taxon>
        <taxon>Mus</taxon>
    </lineage>
</organism>
<proteinExistence type="evidence at protein level"/>
<gene>
    <name type="primary">Camkmt</name>
    <name type="synonym">Clnmt</name>
</gene>
<evidence type="ECO:0000250" key="1"/>
<evidence type="ECO:0000250" key="2">
    <source>
        <dbReference type="UniProtKB" id="Q7Z624"/>
    </source>
</evidence>
<evidence type="ECO:0000255" key="3">
    <source>
        <dbReference type="PROSITE-ProRule" id="PRU00942"/>
    </source>
</evidence>
<evidence type="ECO:0000256" key="4">
    <source>
        <dbReference type="SAM" id="MobiDB-lite"/>
    </source>
</evidence>
<evidence type="ECO:0000269" key="5">
    <source>
    </source>
</evidence>
<evidence type="ECO:0000303" key="6">
    <source>
    </source>
</evidence>